<sequence length="883" mass="99077">MNEQYSALRSNVSMLGKVLGETIKDALGEHILERVETIRKLSKSSRAGNDANRQELLTTLQNLSNDELLPVARAFSQFLNLANTAEQYHSISPKGEAASNPEVIARTLRKLKNQPELSEDTIKKAVESLSLELVLTAHPTEITRRTLIHKMVEVNACLKQLDNKDIADYEHNQLMRRLRQLIAQSWHTDEIRKLRPSPVDEAKWGFAVVENSLWQGVPNYLRELNEQLEENLGYKLPVEFVPVRFTSWMGGDRDGNPNVTADITRHVLLLSRWKATDLFLKDIQVLVSELSMVEATPELLALVGEEGAAEPYRYLMKNLRSRLMATQAWLEARLKGEELPKPEGLLTQNEELWEPLYACYQSLQACGMGIIANGDLLDTLRRVKCFGVPLVRIDIRQESTRHTEALGELTRYLGIGDYESWSEADKQAFLIRELNSKRPLLPRNWQPSAETREVLDTCQVIAEAPQGSIAAYVISMAKTPSDVLAVHLLLKEAGIGFAMPVAPLFETLDDLNNANDVMTQLLNIDWYRGLIQGKQMVMIGYSDSAKDAGVMAASWAQYQAQDALIKTCEKAGIELTLFHGRGGSIGRGGAPAHAALLSQPPGSLKGGLRVTEQGEMIRFKYGLPEITVSSLSLYTGAILEANLLPPPEPKESWRRIMDELSVISCDLYRGYVRENKDFVPYFRSATPEQELGKLPLGSRPAKRRPTGGVESLRAIPWIFAWTQNRLMLPAWLGAGTALQKVVEDGKQSELEAMCRDWPFFSTRLGMLEMVFAKADLWLAEYYDQRLVDKALWPLGKELRNLQEEDIKVVLAIANDSHLMADLPWIAESIQLRNIYTDPLNVLQAELLHRSRQAEKEGQEPDPRVEQALMVTIAGIAAGMRNTG</sequence>
<dbReference type="EC" id="4.1.1.31" evidence="1"/>
<dbReference type="EMBL" id="CU928163">
    <property type="protein sequence ID" value="CAR15613.1"/>
    <property type="molecule type" value="Genomic_DNA"/>
</dbReference>
<dbReference type="RefSeq" id="WP_001005579.1">
    <property type="nucleotide sequence ID" value="NC_011751.1"/>
</dbReference>
<dbReference type="RefSeq" id="YP_002415102.1">
    <property type="nucleotide sequence ID" value="NC_011751.1"/>
</dbReference>
<dbReference type="SMR" id="B7NFQ6"/>
<dbReference type="STRING" id="585056.ECUMN_4487"/>
<dbReference type="GeneID" id="93777937"/>
<dbReference type="KEGG" id="eum:ECUMN_4487"/>
<dbReference type="PATRIC" id="fig|585056.7.peg.4657"/>
<dbReference type="HOGENOM" id="CLU_006557_2_0_6"/>
<dbReference type="Proteomes" id="UP000007097">
    <property type="component" value="Chromosome"/>
</dbReference>
<dbReference type="GO" id="GO:0005829">
    <property type="term" value="C:cytosol"/>
    <property type="evidence" value="ECO:0007669"/>
    <property type="project" value="TreeGrafter"/>
</dbReference>
<dbReference type="GO" id="GO:0000287">
    <property type="term" value="F:magnesium ion binding"/>
    <property type="evidence" value="ECO:0007669"/>
    <property type="project" value="UniProtKB-UniRule"/>
</dbReference>
<dbReference type="GO" id="GO:0008964">
    <property type="term" value="F:phosphoenolpyruvate carboxylase activity"/>
    <property type="evidence" value="ECO:0007669"/>
    <property type="project" value="UniProtKB-UniRule"/>
</dbReference>
<dbReference type="GO" id="GO:0015977">
    <property type="term" value="P:carbon fixation"/>
    <property type="evidence" value="ECO:0007669"/>
    <property type="project" value="UniProtKB-UniRule"/>
</dbReference>
<dbReference type="GO" id="GO:0006107">
    <property type="term" value="P:oxaloacetate metabolic process"/>
    <property type="evidence" value="ECO:0007669"/>
    <property type="project" value="UniProtKB-UniRule"/>
</dbReference>
<dbReference type="GO" id="GO:0006099">
    <property type="term" value="P:tricarboxylic acid cycle"/>
    <property type="evidence" value="ECO:0007669"/>
    <property type="project" value="InterPro"/>
</dbReference>
<dbReference type="FunFam" id="1.20.1440.90:FF:000002">
    <property type="entry name" value="Phosphoenolpyruvate carboxylase"/>
    <property type="match status" value="1"/>
</dbReference>
<dbReference type="Gene3D" id="1.20.1440.90">
    <property type="entry name" value="Phosphoenolpyruvate/pyruvate domain"/>
    <property type="match status" value="1"/>
</dbReference>
<dbReference type="HAMAP" id="MF_00595">
    <property type="entry name" value="PEPcase_type1"/>
    <property type="match status" value="1"/>
</dbReference>
<dbReference type="InterPro" id="IPR021135">
    <property type="entry name" value="PEP_COase"/>
</dbReference>
<dbReference type="InterPro" id="IPR022805">
    <property type="entry name" value="PEP_COase_bac/pln-type"/>
</dbReference>
<dbReference type="InterPro" id="IPR018129">
    <property type="entry name" value="PEP_COase_Lys_AS"/>
</dbReference>
<dbReference type="InterPro" id="IPR033129">
    <property type="entry name" value="PEPCASE_His_AS"/>
</dbReference>
<dbReference type="InterPro" id="IPR015813">
    <property type="entry name" value="Pyrv/PenolPyrv_kinase-like_dom"/>
</dbReference>
<dbReference type="NCBIfam" id="NF000584">
    <property type="entry name" value="PRK00009.1"/>
    <property type="match status" value="1"/>
</dbReference>
<dbReference type="PANTHER" id="PTHR30523">
    <property type="entry name" value="PHOSPHOENOLPYRUVATE CARBOXYLASE"/>
    <property type="match status" value="1"/>
</dbReference>
<dbReference type="PANTHER" id="PTHR30523:SF6">
    <property type="entry name" value="PHOSPHOENOLPYRUVATE CARBOXYLASE"/>
    <property type="match status" value="1"/>
</dbReference>
<dbReference type="Pfam" id="PF00311">
    <property type="entry name" value="PEPcase"/>
    <property type="match status" value="1"/>
</dbReference>
<dbReference type="PRINTS" id="PR00150">
    <property type="entry name" value="PEPCARBXLASE"/>
</dbReference>
<dbReference type="SUPFAM" id="SSF51621">
    <property type="entry name" value="Phosphoenolpyruvate/pyruvate domain"/>
    <property type="match status" value="1"/>
</dbReference>
<dbReference type="PROSITE" id="PS00781">
    <property type="entry name" value="PEPCASE_1"/>
    <property type="match status" value="1"/>
</dbReference>
<dbReference type="PROSITE" id="PS00393">
    <property type="entry name" value="PEPCASE_2"/>
    <property type="match status" value="1"/>
</dbReference>
<keyword id="KW-0120">Carbon dioxide fixation</keyword>
<keyword id="KW-0456">Lyase</keyword>
<keyword id="KW-0460">Magnesium</keyword>
<protein>
    <recommendedName>
        <fullName evidence="1">Phosphoenolpyruvate carboxylase</fullName>
        <shortName evidence="1">PEPC</shortName>
        <shortName evidence="1">PEPCase</shortName>
        <ecNumber evidence="1">4.1.1.31</ecNumber>
    </recommendedName>
</protein>
<evidence type="ECO:0000255" key="1">
    <source>
        <dbReference type="HAMAP-Rule" id="MF_00595"/>
    </source>
</evidence>
<gene>
    <name evidence="1" type="primary">ppc</name>
    <name type="ordered locus">ECUMN_4487</name>
</gene>
<reference key="1">
    <citation type="journal article" date="2009" name="PLoS Genet.">
        <title>Organised genome dynamics in the Escherichia coli species results in highly diverse adaptive paths.</title>
        <authorList>
            <person name="Touchon M."/>
            <person name="Hoede C."/>
            <person name="Tenaillon O."/>
            <person name="Barbe V."/>
            <person name="Baeriswyl S."/>
            <person name="Bidet P."/>
            <person name="Bingen E."/>
            <person name="Bonacorsi S."/>
            <person name="Bouchier C."/>
            <person name="Bouvet O."/>
            <person name="Calteau A."/>
            <person name="Chiapello H."/>
            <person name="Clermont O."/>
            <person name="Cruveiller S."/>
            <person name="Danchin A."/>
            <person name="Diard M."/>
            <person name="Dossat C."/>
            <person name="Karoui M.E."/>
            <person name="Frapy E."/>
            <person name="Garry L."/>
            <person name="Ghigo J.M."/>
            <person name="Gilles A.M."/>
            <person name="Johnson J."/>
            <person name="Le Bouguenec C."/>
            <person name="Lescat M."/>
            <person name="Mangenot S."/>
            <person name="Martinez-Jehanne V."/>
            <person name="Matic I."/>
            <person name="Nassif X."/>
            <person name="Oztas S."/>
            <person name="Petit M.A."/>
            <person name="Pichon C."/>
            <person name="Rouy Z."/>
            <person name="Ruf C.S."/>
            <person name="Schneider D."/>
            <person name="Tourret J."/>
            <person name="Vacherie B."/>
            <person name="Vallenet D."/>
            <person name="Medigue C."/>
            <person name="Rocha E.P.C."/>
            <person name="Denamur E."/>
        </authorList>
    </citation>
    <scope>NUCLEOTIDE SEQUENCE [LARGE SCALE GENOMIC DNA]</scope>
    <source>
        <strain>UMN026 / ExPEC</strain>
    </source>
</reference>
<feature type="chain" id="PRO_1000129830" description="Phosphoenolpyruvate carboxylase">
    <location>
        <begin position="1"/>
        <end position="883"/>
    </location>
</feature>
<feature type="active site" evidence="1">
    <location>
        <position position="138"/>
    </location>
</feature>
<feature type="active site" evidence="1">
    <location>
        <position position="546"/>
    </location>
</feature>
<name>CAPP_ECOLU</name>
<proteinExistence type="inferred from homology"/>
<organism>
    <name type="scientific">Escherichia coli O17:K52:H18 (strain UMN026 / ExPEC)</name>
    <dbReference type="NCBI Taxonomy" id="585056"/>
    <lineage>
        <taxon>Bacteria</taxon>
        <taxon>Pseudomonadati</taxon>
        <taxon>Pseudomonadota</taxon>
        <taxon>Gammaproteobacteria</taxon>
        <taxon>Enterobacterales</taxon>
        <taxon>Enterobacteriaceae</taxon>
        <taxon>Escherichia</taxon>
    </lineage>
</organism>
<accession>B7NFQ6</accession>
<comment type="function">
    <text evidence="1">Forms oxaloacetate, a four-carbon dicarboxylic acid source for the tricarboxylic acid cycle.</text>
</comment>
<comment type="catalytic activity">
    <reaction evidence="1">
        <text>oxaloacetate + phosphate = phosphoenolpyruvate + hydrogencarbonate</text>
        <dbReference type="Rhea" id="RHEA:28370"/>
        <dbReference type="ChEBI" id="CHEBI:16452"/>
        <dbReference type="ChEBI" id="CHEBI:17544"/>
        <dbReference type="ChEBI" id="CHEBI:43474"/>
        <dbReference type="ChEBI" id="CHEBI:58702"/>
        <dbReference type="EC" id="4.1.1.31"/>
    </reaction>
</comment>
<comment type="cofactor">
    <cofactor evidence="1">
        <name>Mg(2+)</name>
        <dbReference type="ChEBI" id="CHEBI:18420"/>
    </cofactor>
</comment>
<comment type="similarity">
    <text evidence="1">Belongs to the PEPCase type 1 family.</text>
</comment>